<accession>B2J590</accession>
<reference key="1">
    <citation type="journal article" date="2013" name="Plant Physiol.">
        <title>A Nostoc punctiforme Sugar Transporter Necessary to Establish a Cyanobacterium-Plant Symbiosis.</title>
        <authorList>
            <person name="Ekman M."/>
            <person name="Picossi S."/>
            <person name="Campbell E.L."/>
            <person name="Meeks J.C."/>
            <person name="Flores E."/>
        </authorList>
    </citation>
    <scope>NUCLEOTIDE SEQUENCE [LARGE SCALE GENOMIC DNA]</scope>
    <source>
        <strain>ATCC 29133 / PCC 73102</strain>
    </source>
</reference>
<protein>
    <recommendedName>
        <fullName evidence="1">Photosystem I reaction center subunit IX</fullName>
    </recommendedName>
</protein>
<organism>
    <name type="scientific">Nostoc punctiforme (strain ATCC 29133 / PCC 73102)</name>
    <dbReference type="NCBI Taxonomy" id="63737"/>
    <lineage>
        <taxon>Bacteria</taxon>
        <taxon>Bacillati</taxon>
        <taxon>Cyanobacteriota</taxon>
        <taxon>Cyanophyceae</taxon>
        <taxon>Nostocales</taxon>
        <taxon>Nostocaceae</taxon>
        <taxon>Nostoc</taxon>
    </lineage>
</organism>
<sequence>MADKGDQSSYLIKFISTAPVAATIWLTITAGILIEFNRFFPDLLFHPLP</sequence>
<proteinExistence type="inferred from homology"/>
<evidence type="ECO:0000255" key="1">
    <source>
        <dbReference type="HAMAP-Rule" id="MF_00522"/>
    </source>
</evidence>
<gene>
    <name evidence="1" type="primary">psaJ</name>
    <name type="ordered locus">Npun_F3863</name>
</gene>
<dbReference type="EMBL" id="CP001037">
    <property type="protein sequence ID" value="ACC82247.1"/>
    <property type="molecule type" value="Genomic_DNA"/>
</dbReference>
<dbReference type="RefSeq" id="WP_012410218.1">
    <property type="nucleotide sequence ID" value="NC_010628.1"/>
</dbReference>
<dbReference type="SMR" id="B2J590"/>
<dbReference type="STRING" id="63737.Npun_F3863"/>
<dbReference type="EnsemblBacteria" id="ACC82247">
    <property type="protein sequence ID" value="ACC82247"/>
    <property type="gene ID" value="Npun_F3863"/>
</dbReference>
<dbReference type="KEGG" id="npu:Npun_F3863"/>
<dbReference type="eggNOG" id="ENOG5033A5A">
    <property type="taxonomic scope" value="Bacteria"/>
</dbReference>
<dbReference type="HOGENOM" id="CLU_212133_1_1_3"/>
<dbReference type="OrthoDB" id="532702at2"/>
<dbReference type="PhylomeDB" id="B2J590"/>
<dbReference type="Proteomes" id="UP000001191">
    <property type="component" value="Chromosome"/>
</dbReference>
<dbReference type="GO" id="GO:0009522">
    <property type="term" value="C:photosystem I"/>
    <property type="evidence" value="ECO:0007669"/>
    <property type="project" value="UniProtKB-KW"/>
</dbReference>
<dbReference type="GO" id="GO:0031676">
    <property type="term" value="C:plasma membrane-derived thylakoid membrane"/>
    <property type="evidence" value="ECO:0007669"/>
    <property type="project" value="UniProtKB-SubCell"/>
</dbReference>
<dbReference type="GO" id="GO:0015979">
    <property type="term" value="P:photosynthesis"/>
    <property type="evidence" value="ECO:0007669"/>
    <property type="project" value="UniProtKB-UniRule"/>
</dbReference>
<dbReference type="Gene3D" id="1.20.5.510">
    <property type="entry name" value="Single helix bin"/>
    <property type="match status" value="1"/>
</dbReference>
<dbReference type="HAMAP" id="MF_00522">
    <property type="entry name" value="PSI_PsaJ"/>
    <property type="match status" value="1"/>
</dbReference>
<dbReference type="InterPro" id="IPR002615">
    <property type="entry name" value="PSI_PsaJ"/>
</dbReference>
<dbReference type="InterPro" id="IPR036062">
    <property type="entry name" value="PSI_PsaJ_sf"/>
</dbReference>
<dbReference type="NCBIfam" id="NF002743">
    <property type="entry name" value="PRK02733.1"/>
    <property type="match status" value="1"/>
</dbReference>
<dbReference type="PANTHER" id="PTHR36082">
    <property type="match status" value="1"/>
</dbReference>
<dbReference type="PANTHER" id="PTHR36082:SF2">
    <property type="entry name" value="PHOTOSYSTEM I REACTION CENTER SUBUNIT IX"/>
    <property type="match status" value="1"/>
</dbReference>
<dbReference type="Pfam" id="PF01701">
    <property type="entry name" value="PSI_PsaJ"/>
    <property type="match status" value="1"/>
</dbReference>
<dbReference type="SUPFAM" id="SSF81544">
    <property type="entry name" value="Subunit IX of photosystem I reaction centre, PsaJ"/>
    <property type="match status" value="1"/>
</dbReference>
<feature type="chain" id="PRO_1000127651" description="Photosystem I reaction center subunit IX">
    <location>
        <begin position="1"/>
        <end position="49"/>
    </location>
</feature>
<feature type="transmembrane region" description="Helical" evidence="1">
    <location>
        <begin position="14"/>
        <end position="34"/>
    </location>
</feature>
<comment type="function">
    <text evidence="1">May help in the organization of the PsaE and PsaF subunits.</text>
</comment>
<comment type="subcellular location">
    <subcellularLocation>
        <location evidence="1">Cellular thylakoid membrane</location>
        <topology evidence="1">Single-pass membrane protein</topology>
    </subcellularLocation>
</comment>
<comment type="similarity">
    <text evidence="1">Belongs to the PsaJ family.</text>
</comment>
<name>PSAJ_NOSP7</name>
<keyword id="KW-0472">Membrane</keyword>
<keyword id="KW-0602">Photosynthesis</keyword>
<keyword id="KW-0603">Photosystem I</keyword>
<keyword id="KW-1185">Reference proteome</keyword>
<keyword id="KW-0793">Thylakoid</keyword>
<keyword id="KW-0812">Transmembrane</keyword>
<keyword id="KW-1133">Transmembrane helix</keyword>